<evidence type="ECO:0000255" key="1">
    <source>
        <dbReference type="HAMAP-Rule" id="MF_01544"/>
    </source>
</evidence>
<accession>Q8X9E5</accession>
<accession>Q7AAG0</accession>
<proteinExistence type="inferred from homology"/>
<feature type="chain" id="PRO_0000201851" description="p-hydroxybenzoic acid efflux pump subunit AaeA">
    <location>
        <begin position="1"/>
        <end position="309"/>
    </location>
</feature>
<feature type="transmembrane region" description="Helical" evidence="1">
    <location>
        <begin position="12"/>
        <end position="32"/>
    </location>
</feature>
<reference key="1">
    <citation type="journal article" date="2001" name="Nature">
        <title>Genome sequence of enterohaemorrhagic Escherichia coli O157:H7.</title>
        <authorList>
            <person name="Perna N.T."/>
            <person name="Plunkett G. III"/>
            <person name="Burland V."/>
            <person name="Mau B."/>
            <person name="Glasner J.D."/>
            <person name="Rose D.J."/>
            <person name="Mayhew G.F."/>
            <person name="Evans P.S."/>
            <person name="Gregor J."/>
            <person name="Kirkpatrick H.A."/>
            <person name="Posfai G."/>
            <person name="Hackett J."/>
            <person name="Klink S."/>
            <person name="Boutin A."/>
            <person name="Shao Y."/>
            <person name="Miller L."/>
            <person name="Grotbeck E.J."/>
            <person name="Davis N.W."/>
            <person name="Lim A."/>
            <person name="Dimalanta E.T."/>
            <person name="Potamousis K."/>
            <person name="Apodaca J."/>
            <person name="Anantharaman T.S."/>
            <person name="Lin J."/>
            <person name="Yen G."/>
            <person name="Schwartz D.C."/>
            <person name="Welch R.A."/>
            <person name="Blattner F.R."/>
        </authorList>
    </citation>
    <scope>NUCLEOTIDE SEQUENCE [LARGE SCALE GENOMIC DNA]</scope>
    <source>
        <strain>O157:H7 / EDL933 / ATCC 700927 / EHEC</strain>
    </source>
</reference>
<reference key="2">
    <citation type="journal article" date="2001" name="DNA Res.">
        <title>Complete genome sequence of enterohemorrhagic Escherichia coli O157:H7 and genomic comparison with a laboratory strain K-12.</title>
        <authorList>
            <person name="Hayashi T."/>
            <person name="Makino K."/>
            <person name="Ohnishi M."/>
            <person name="Kurokawa K."/>
            <person name="Ishii K."/>
            <person name="Yokoyama K."/>
            <person name="Han C.-G."/>
            <person name="Ohtsubo E."/>
            <person name="Nakayama K."/>
            <person name="Murata T."/>
            <person name="Tanaka M."/>
            <person name="Tobe T."/>
            <person name="Iida T."/>
            <person name="Takami H."/>
            <person name="Honda T."/>
            <person name="Sasakawa C."/>
            <person name="Ogasawara N."/>
            <person name="Yasunaga T."/>
            <person name="Kuhara S."/>
            <person name="Shiba T."/>
            <person name="Hattori M."/>
            <person name="Shinagawa H."/>
        </authorList>
    </citation>
    <scope>NUCLEOTIDE SEQUENCE [LARGE SCALE GENOMIC DNA]</scope>
    <source>
        <strain>O157:H7 / Sakai / RIMD 0509952 / EHEC</strain>
    </source>
</reference>
<protein>
    <recommendedName>
        <fullName evidence="1">p-hydroxybenzoic acid efflux pump subunit AaeA</fullName>
        <shortName evidence="1">pHBA efflux pump protein A</shortName>
    </recommendedName>
</protein>
<dbReference type="EMBL" id="AE005174">
    <property type="protein sequence ID" value="AAG58369.1"/>
    <property type="molecule type" value="Genomic_DNA"/>
</dbReference>
<dbReference type="EMBL" id="BA000007">
    <property type="protein sequence ID" value="BAB37537.1"/>
    <property type="molecule type" value="Genomic_DNA"/>
</dbReference>
<dbReference type="PIR" id="B91143">
    <property type="entry name" value="B91143"/>
</dbReference>
<dbReference type="PIR" id="E85988">
    <property type="entry name" value="E85988"/>
</dbReference>
<dbReference type="RefSeq" id="NP_312141.1">
    <property type="nucleotide sequence ID" value="NC_002695.1"/>
</dbReference>
<dbReference type="RefSeq" id="WP_000854038.1">
    <property type="nucleotide sequence ID" value="NZ_VOAI01000014.1"/>
</dbReference>
<dbReference type="SMR" id="Q8X9E5"/>
<dbReference type="STRING" id="155864.Z4600"/>
<dbReference type="GeneID" id="916117"/>
<dbReference type="KEGG" id="ece:Z4600"/>
<dbReference type="KEGG" id="ecs:ECs_4114"/>
<dbReference type="PATRIC" id="fig|386585.9.peg.4295"/>
<dbReference type="eggNOG" id="COG1566">
    <property type="taxonomic scope" value="Bacteria"/>
</dbReference>
<dbReference type="HOGENOM" id="CLU_018816_15_2_6"/>
<dbReference type="OMA" id="MFSPWTR"/>
<dbReference type="Proteomes" id="UP000000558">
    <property type="component" value="Chromosome"/>
</dbReference>
<dbReference type="Proteomes" id="UP000002519">
    <property type="component" value="Chromosome"/>
</dbReference>
<dbReference type="GO" id="GO:0005886">
    <property type="term" value="C:plasma membrane"/>
    <property type="evidence" value="ECO:0007669"/>
    <property type="project" value="UniProtKB-SubCell"/>
</dbReference>
<dbReference type="GO" id="GO:0022857">
    <property type="term" value="F:transmembrane transporter activity"/>
    <property type="evidence" value="ECO:0007669"/>
    <property type="project" value="UniProtKB-UniRule"/>
</dbReference>
<dbReference type="FunFam" id="2.40.30.170:FF:000002">
    <property type="entry name" value="p-hydroxybenzoic acid efflux pump subunit AaeA"/>
    <property type="match status" value="1"/>
</dbReference>
<dbReference type="Gene3D" id="2.40.30.170">
    <property type="match status" value="1"/>
</dbReference>
<dbReference type="Gene3D" id="2.40.50.100">
    <property type="match status" value="1"/>
</dbReference>
<dbReference type="HAMAP" id="MF_01544">
    <property type="entry name" value="AaeA"/>
    <property type="match status" value="1"/>
</dbReference>
<dbReference type="InterPro" id="IPR043602">
    <property type="entry name" value="CusB-like_dom_1"/>
</dbReference>
<dbReference type="InterPro" id="IPR032317">
    <property type="entry name" value="CusB_D23"/>
</dbReference>
<dbReference type="InterPro" id="IPR050393">
    <property type="entry name" value="MFP_Efflux_Pump"/>
</dbReference>
<dbReference type="InterPro" id="IPR022871">
    <property type="entry name" value="PHBA_efflux_pump_AaeA"/>
</dbReference>
<dbReference type="InterPro" id="IPR006143">
    <property type="entry name" value="RND_pump_MFP"/>
</dbReference>
<dbReference type="NCBIfam" id="NF007850">
    <property type="entry name" value="PRK10559.1"/>
    <property type="match status" value="1"/>
</dbReference>
<dbReference type="NCBIfam" id="TIGR01730">
    <property type="entry name" value="RND_mfp"/>
    <property type="match status" value="1"/>
</dbReference>
<dbReference type="PANTHER" id="PTHR30367:SF12">
    <property type="entry name" value="P-HYDROXYBENZOIC ACID EFFLUX PUMP SUBUNIT AAEA"/>
    <property type="match status" value="1"/>
</dbReference>
<dbReference type="PANTHER" id="PTHR30367">
    <property type="entry name" value="P-HYDROXYBENZOIC ACID EFFLUX PUMP SUBUNIT AAEA-RELATED"/>
    <property type="match status" value="1"/>
</dbReference>
<dbReference type="Pfam" id="PF00529">
    <property type="entry name" value="CusB_dom_1"/>
    <property type="match status" value="1"/>
</dbReference>
<dbReference type="Pfam" id="PF16576">
    <property type="entry name" value="HlyD_D23"/>
    <property type="match status" value="1"/>
</dbReference>
<dbReference type="SUPFAM" id="SSF111369">
    <property type="entry name" value="HlyD-like secretion proteins"/>
    <property type="match status" value="1"/>
</dbReference>
<sequence length="309" mass="34645">MKTLIRKFSRTAITVVLVILAFIAIFNAWVYYTESPWTRDARFSADVVAIAPDVSGLITQVNVHNQLVKKGQVLFTIDQPRYQKALEEAQADVAYYQVLAQEKRQEAGRRNRLGVQAMSREEIDQANNVLQTVLHQLAKAQATRDLAKLDLERTVIRAPADGWVTNLNVYTGEFITRGSTAVALVKQNSFYVLAYMEETKLEGVRPGYRAEITPLGSNKVLKGTVDSVAAGVTNASSTRDDKGMATIDSNLEWVRLAQRVPVRIRLDNQQENIWPAGTTATVVVTGKQDRDESQDSFFRKMAHRLREFG</sequence>
<name>AAEA_ECO57</name>
<organism>
    <name type="scientific">Escherichia coli O157:H7</name>
    <dbReference type="NCBI Taxonomy" id="83334"/>
    <lineage>
        <taxon>Bacteria</taxon>
        <taxon>Pseudomonadati</taxon>
        <taxon>Pseudomonadota</taxon>
        <taxon>Gammaproteobacteria</taxon>
        <taxon>Enterobacterales</taxon>
        <taxon>Enterobacteriaceae</taxon>
        <taxon>Escherichia</taxon>
    </lineage>
</organism>
<keyword id="KW-0997">Cell inner membrane</keyword>
<keyword id="KW-1003">Cell membrane</keyword>
<keyword id="KW-0472">Membrane</keyword>
<keyword id="KW-1185">Reference proteome</keyword>
<keyword id="KW-0812">Transmembrane</keyword>
<keyword id="KW-1133">Transmembrane helix</keyword>
<keyword id="KW-0813">Transport</keyword>
<gene>
    <name evidence="1" type="primary">aaeA</name>
    <name type="ordered locus">Z4600</name>
    <name type="ordered locus">ECs4114</name>
</gene>
<comment type="function">
    <text evidence="1">Forms an efflux pump with AaeB.</text>
</comment>
<comment type="subcellular location">
    <subcellularLocation>
        <location evidence="1">Cell inner membrane</location>
        <topology evidence="1">Single-pass membrane protein</topology>
    </subcellularLocation>
</comment>
<comment type="induction">
    <text evidence="1">Positively coregulated with aaeB and aaeX by AaeR.</text>
</comment>
<comment type="similarity">
    <text evidence="1">Belongs to the membrane fusion protein (MFP) (TC 8.A.1) family.</text>
</comment>